<evidence type="ECO:0000250" key="1"/>
<evidence type="ECO:0000256" key="2">
    <source>
        <dbReference type="SAM" id="MobiDB-lite"/>
    </source>
</evidence>
<evidence type="ECO:0000269" key="3">
    <source>
    </source>
</evidence>
<evidence type="ECO:0000269" key="4">
    <source>
    </source>
</evidence>
<evidence type="ECO:0000303" key="5">
    <source>
    </source>
</evidence>
<evidence type="ECO:0000303" key="6">
    <source>
    </source>
</evidence>
<evidence type="ECO:0000303" key="7">
    <source>
    </source>
</evidence>
<evidence type="ECO:0000305" key="8"/>
<evidence type="ECO:0000305" key="9">
    <source>
    </source>
</evidence>
<organism>
    <name type="scientific">Mus musculus</name>
    <name type="common">Mouse</name>
    <dbReference type="NCBI Taxonomy" id="10090"/>
    <lineage>
        <taxon>Eukaryota</taxon>
        <taxon>Metazoa</taxon>
        <taxon>Chordata</taxon>
        <taxon>Craniata</taxon>
        <taxon>Vertebrata</taxon>
        <taxon>Euteleostomi</taxon>
        <taxon>Mammalia</taxon>
        <taxon>Eutheria</taxon>
        <taxon>Euarchontoglires</taxon>
        <taxon>Glires</taxon>
        <taxon>Rodentia</taxon>
        <taxon>Myomorpha</taxon>
        <taxon>Muroidea</taxon>
        <taxon>Muridae</taxon>
        <taxon>Murinae</taxon>
        <taxon>Mus</taxon>
        <taxon>Mus</taxon>
    </lineage>
</organism>
<protein>
    <recommendedName>
        <fullName evidence="7">Enolase 4</fullName>
        <ecNumber evidence="9">4.2.1.11</ecNumber>
    </recommendedName>
    <alternativeName>
        <fullName>2-phospho-D-glycerate hydro-lyase</fullName>
    </alternativeName>
</protein>
<dbReference type="EC" id="4.2.1.11" evidence="9"/>
<dbReference type="EMBL" id="AK032395">
    <property type="protein sequence ID" value="BAC27851.1"/>
    <property type="molecule type" value="mRNA"/>
</dbReference>
<dbReference type="EMBL" id="AK076682">
    <property type="protein sequence ID" value="BAC36444.1"/>
    <property type="status" value="ALT_INIT"/>
    <property type="molecule type" value="mRNA"/>
</dbReference>
<dbReference type="EMBL" id="AC102604">
    <property type="status" value="NOT_ANNOTATED_CDS"/>
    <property type="molecule type" value="Genomic_DNA"/>
</dbReference>
<dbReference type="EMBL" id="BC023285">
    <property type="protein sequence ID" value="AAH23285.1"/>
    <property type="status" value="ALT_INIT"/>
    <property type="molecule type" value="mRNA"/>
</dbReference>
<dbReference type="RefSeq" id="NP_848804.2">
    <property type="nucleotide sequence ID" value="NM_178689.4"/>
</dbReference>
<dbReference type="RefSeq" id="XP_030106782.1">
    <molecule id="Q8C042-5"/>
    <property type="nucleotide sequence ID" value="XM_030250922.1"/>
</dbReference>
<dbReference type="SMR" id="Q8C042"/>
<dbReference type="FunCoup" id="Q8C042">
    <property type="interactions" value="383"/>
</dbReference>
<dbReference type="STRING" id="10090.ENSMUSP00000144272"/>
<dbReference type="iPTMnet" id="Q8C042"/>
<dbReference type="PhosphoSitePlus" id="Q8C042"/>
<dbReference type="PaxDb" id="10090-ENSMUSP00000062584"/>
<dbReference type="ProteomicsDB" id="275662">
    <molecule id="Q8C042-1"/>
</dbReference>
<dbReference type="ProteomicsDB" id="275663">
    <molecule id="Q8C042-2"/>
</dbReference>
<dbReference type="ProteomicsDB" id="275664">
    <molecule id="Q8C042-3"/>
</dbReference>
<dbReference type="ProteomicsDB" id="275665">
    <molecule id="Q8C042-4"/>
</dbReference>
<dbReference type="ProteomicsDB" id="275666">
    <molecule id="Q8C042-5"/>
</dbReference>
<dbReference type="Antibodypedia" id="49029">
    <property type="antibodies" value="76 antibodies from 13 providers"/>
</dbReference>
<dbReference type="DNASU" id="226265"/>
<dbReference type="GeneID" id="226265"/>
<dbReference type="KEGG" id="mmu:226265"/>
<dbReference type="UCSC" id="uc012bob.1">
    <molecule id="Q8C042-1"/>
    <property type="organism name" value="mouse"/>
</dbReference>
<dbReference type="AGR" id="MGI:2441717"/>
<dbReference type="CTD" id="387712"/>
<dbReference type="MGI" id="MGI:2441717">
    <property type="gene designation" value="Eno4"/>
</dbReference>
<dbReference type="VEuPathDB" id="HostDB:ENSMUSG00000048029"/>
<dbReference type="eggNOG" id="KOG2670">
    <property type="taxonomic scope" value="Eukaryota"/>
</dbReference>
<dbReference type="HOGENOM" id="CLU_493979_0_0_1"/>
<dbReference type="InParanoid" id="Q8C042"/>
<dbReference type="OrthoDB" id="10009078at2759"/>
<dbReference type="PhylomeDB" id="Q8C042"/>
<dbReference type="TreeFam" id="TF354238"/>
<dbReference type="Reactome" id="R-MMU-70171">
    <property type="pathway name" value="Glycolysis"/>
</dbReference>
<dbReference type="Reactome" id="R-MMU-70263">
    <property type="pathway name" value="Gluconeogenesis"/>
</dbReference>
<dbReference type="UniPathway" id="UPA00109">
    <property type="reaction ID" value="UER00187"/>
</dbReference>
<dbReference type="BioGRID-ORCS" id="226265">
    <property type="hits" value="1 hit in 70 CRISPR screens"/>
</dbReference>
<dbReference type="PRO" id="PR:Q8C042"/>
<dbReference type="Proteomes" id="UP000000589">
    <property type="component" value="Chromosome 19"/>
</dbReference>
<dbReference type="RNAct" id="Q8C042">
    <property type="molecule type" value="protein"/>
</dbReference>
<dbReference type="Bgee" id="ENSMUSG00000048029">
    <property type="expression patterns" value="Expressed in ventricular system choroidal fissure and 86 other cell types or tissues"/>
</dbReference>
<dbReference type="ExpressionAtlas" id="Q8C042">
    <property type="expression patterns" value="baseline and differential"/>
</dbReference>
<dbReference type="GO" id="GO:0000015">
    <property type="term" value="C:phosphopyruvate hydratase complex"/>
    <property type="evidence" value="ECO:0007669"/>
    <property type="project" value="InterPro"/>
</dbReference>
<dbReference type="GO" id="GO:0097228">
    <property type="term" value="C:sperm principal piece"/>
    <property type="evidence" value="ECO:0000314"/>
    <property type="project" value="MGI"/>
</dbReference>
<dbReference type="GO" id="GO:0000287">
    <property type="term" value="F:magnesium ion binding"/>
    <property type="evidence" value="ECO:0007669"/>
    <property type="project" value="InterPro"/>
</dbReference>
<dbReference type="GO" id="GO:0004634">
    <property type="term" value="F:phosphopyruvate hydratase activity"/>
    <property type="evidence" value="ECO:0000315"/>
    <property type="project" value="MGI"/>
</dbReference>
<dbReference type="GO" id="GO:0044782">
    <property type="term" value="P:cilium organization"/>
    <property type="evidence" value="ECO:0000315"/>
    <property type="project" value="MGI"/>
</dbReference>
<dbReference type="GO" id="GO:0030317">
    <property type="term" value="P:flagellated sperm motility"/>
    <property type="evidence" value="ECO:0000315"/>
    <property type="project" value="MGI"/>
</dbReference>
<dbReference type="GO" id="GO:0006096">
    <property type="term" value="P:glycolytic process"/>
    <property type="evidence" value="ECO:0000315"/>
    <property type="project" value="MGI"/>
</dbReference>
<dbReference type="CDD" id="cd22974">
    <property type="entry name" value="DD_ENO4"/>
    <property type="match status" value="1"/>
</dbReference>
<dbReference type="FunFam" id="3.20.20.120:FF:000022">
    <property type="entry name" value="Enolase 4"/>
    <property type="match status" value="1"/>
</dbReference>
<dbReference type="Gene3D" id="3.20.20.120">
    <property type="entry name" value="Enolase-like C-terminal domain"/>
    <property type="match status" value="1"/>
</dbReference>
<dbReference type="Gene3D" id="3.30.390.10">
    <property type="entry name" value="Enolase-like, N-terminal domain"/>
    <property type="match status" value="1"/>
</dbReference>
<dbReference type="InterPro" id="IPR047500">
    <property type="entry name" value="DD_ENO4"/>
</dbReference>
<dbReference type="InterPro" id="IPR000941">
    <property type="entry name" value="Enolase"/>
</dbReference>
<dbReference type="InterPro" id="IPR036849">
    <property type="entry name" value="Enolase-like_C_sf"/>
</dbReference>
<dbReference type="InterPro" id="IPR029017">
    <property type="entry name" value="Enolase-like_N"/>
</dbReference>
<dbReference type="InterPro" id="IPR020810">
    <property type="entry name" value="Enolase_C"/>
</dbReference>
<dbReference type="InterPro" id="IPR020811">
    <property type="entry name" value="Enolase_N"/>
</dbReference>
<dbReference type="PANTHER" id="PTHR11902">
    <property type="entry name" value="ENOLASE"/>
    <property type="match status" value="1"/>
</dbReference>
<dbReference type="PANTHER" id="PTHR11902:SF30">
    <property type="entry name" value="ENOLASE 4"/>
    <property type="match status" value="1"/>
</dbReference>
<dbReference type="Pfam" id="PF00113">
    <property type="entry name" value="Enolase_C"/>
    <property type="match status" value="1"/>
</dbReference>
<dbReference type="SMART" id="SM01192">
    <property type="entry name" value="Enolase_C"/>
    <property type="match status" value="1"/>
</dbReference>
<dbReference type="SMART" id="SM01193">
    <property type="entry name" value="Enolase_N"/>
    <property type="match status" value="1"/>
</dbReference>
<dbReference type="SUPFAM" id="SSF51604">
    <property type="entry name" value="Enolase C-terminal domain-like"/>
    <property type="match status" value="1"/>
</dbReference>
<dbReference type="SUPFAM" id="SSF54826">
    <property type="entry name" value="Enolase N-terminal domain-like"/>
    <property type="match status" value="1"/>
</dbReference>
<dbReference type="SUPFAM" id="SSF101447">
    <property type="entry name" value="Formin homology 2 domain (FH2 domain)"/>
    <property type="match status" value="1"/>
</dbReference>
<sequence>MGDEDGGRRGGITRDLQKLKQQAMAYYQENDVPRKLEDLLNSTFYLQPADVYGHLKANYFSKLAKPPSICKIVGKTILDGLGLPTLQVEISCTIQNFPKYICAVAIPTHFEVVENALPEALDAEDSERAQAVNTAVQWINQSITEELWGLVPSNQAEVDHRLRTFFEHKVQEDKERKELEKSQEELVPAPPPVTLPPPPPPPPPPPSKKKGQKAGRRDTLLEKPVSPPEPPEPVLHGSMAIGAVSLAVAKASATLASDPLYLTLASLKHDQEQPSTFSMPLLMGSVLSCGKSSPGKLHLMKEVICIPSPGLTAKQSVELLLEIQKQVNRAMETLPPPKQETKKGHNGSKRAQPPITGKVSHLGCLTINYDAIEQPLLLLQGICSNLGLELGVNFHLAINCAGHELMDYSKGKYEVMVGTHKSAAEMVELYVDLINKYPSIIALIDPFRKEDAEQWDSLYAALASRCYLIAGAASGSVSKLLECRNISTLKSHGLIIKHTNQTTMSDLVEITHLINGKKLLAVFGSTDSESSDDSLVDLAVGFGARFIKLGGLSRGERMTKYNRLLAIEEELIQRGVWGFSEEHNFSFFQEDATATMAEETLGLLDSIFPTEVIEESAKT</sequence>
<feature type="chain" id="PRO_0000348455" description="Enolase 4">
    <location>
        <begin position="1"/>
        <end position="619"/>
    </location>
</feature>
<feature type="region of interest" description="Disordered" evidence="2">
    <location>
        <begin position="173"/>
        <end position="236"/>
    </location>
</feature>
<feature type="region of interest" description="Disordered" evidence="2">
    <location>
        <begin position="333"/>
        <end position="354"/>
    </location>
</feature>
<feature type="compositionally biased region" description="Basic and acidic residues" evidence="2">
    <location>
        <begin position="173"/>
        <end position="184"/>
    </location>
</feature>
<feature type="compositionally biased region" description="Pro residues" evidence="2">
    <location>
        <begin position="188"/>
        <end position="206"/>
    </location>
</feature>
<feature type="active site" description="Proton acceptor" evidence="1">
    <location>
        <position position="497"/>
    </location>
</feature>
<feature type="binding site" evidence="1">
    <location>
        <position position="302"/>
    </location>
    <ligand>
        <name>substrate</name>
    </ligand>
</feature>
<feature type="binding site" evidence="1">
    <location>
        <position position="548"/>
    </location>
    <ligand>
        <name>substrate</name>
    </ligand>
</feature>
<feature type="splice variant" id="VSP_058229" description="In isoform 5." evidence="7">
    <location>
        <begin position="1"/>
        <end position="238"/>
    </location>
</feature>
<feature type="splice variant" id="VSP_058230" description="In isoform 4." evidence="7">
    <original>AVGFGARFIKLGGLSRGERMTKYNRLLAIEEELIQRGVWGFSEEHNFSFFQEDATATMAEETLGLLDSIFPTEVIEESAKT</original>
    <variation>VSVKNTIFLSFKRMLLPQWLRKLLGSWTPSSPQR</variation>
    <location>
        <begin position="539"/>
        <end position="619"/>
    </location>
</feature>
<feature type="splice variant" id="VSP_035167" description="In isoform 2." evidence="6">
    <location>
        <begin position="578"/>
        <end position="589"/>
    </location>
</feature>
<feature type="splice variant" id="VSP_035168" description="In isoform 3." evidence="5">
    <original>FSEEHN</original>
    <variation>CYCHNG</variation>
    <location>
        <begin position="579"/>
        <end position="584"/>
    </location>
</feature>
<feature type="splice variant" id="VSP_035169" description="In isoform 3." evidence="5">
    <location>
        <begin position="585"/>
        <end position="619"/>
    </location>
</feature>
<feature type="sequence conflict" description="In Ref. 1; BAC27851." evidence="8" ref="1">
    <original>R</original>
    <variation>W</variation>
    <location>
        <position position="161"/>
    </location>
</feature>
<keyword id="KW-0025">Alternative splicing</keyword>
<keyword id="KW-0324">Glycolysis</keyword>
<keyword id="KW-0456">Lyase</keyword>
<keyword id="KW-1185">Reference proteome</keyword>
<proteinExistence type="evidence at protein level"/>
<name>ENO4_MOUSE</name>
<comment type="function">
    <text evidence="3">Required for sperm motility, function and male fertility. May be involved in the normal assembly of the sperm fibrous sheath and provides most of the enolase activity in sperm (PubMed:23446454).</text>
</comment>
<comment type="catalytic activity">
    <reaction evidence="9">
        <text>(2R)-2-phosphoglycerate = phosphoenolpyruvate + H2O</text>
        <dbReference type="Rhea" id="RHEA:10164"/>
        <dbReference type="ChEBI" id="CHEBI:15377"/>
        <dbReference type="ChEBI" id="CHEBI:58289"/>
        <dbReference type="ChEBI" id="CHEBI:58702"/>
        <dbReference type="EC" id="4.2.1.11"/>
    </reaction>
</comment>
<comment type="pathway">
    <text evidence="9">Carbohydrate degradation; glycolysis; pyruvate from D-glyceraldehyde 3-phosphate: step 4/5.</text>
</comment>
<comment type="subunit">
    <text evidence="3">Interacts with ENO1 (PubMed:23446454). Isoform 1 and isoform 4 interact with AKAP4 (PubMed:23446454).</text>
</comment>
<comment type="alternative products">
    <event type="alternative splicing"/>
    <isoform>
        <id>Q8C042-1</id>
        <name>1</name>
        <sequence type="displayed"/>
    </isoform>
    <isoform>
        <id>Q8C042-2</id>
        <name>2</name>
        <sequence type="described" ref="VSP_035167"/>
    </isoform>
    <isoform>
        <id>Q8C042-3</id>
        <name>3</name>
        <sequence type="described" ref="VSP_035168 VSP_035169"/>
    </isoform>
    <isoform>
        <id>Q8C042-4</id>
        <name>4</name>
        <sequence type="described" ref="VSP_058230"/>
    </isoform>
    <isoform>
        <id>Q8C042-5</id>
        <name>5</name>
        <sequence type="described" ref="VSP_058229"/>
    </isoform>
</comment>
<comment type="tissue specificity">
    <text evidence="3 4">Testis-specific (PubMed:23446454, PubMed:32248064). Expressed in spermatids and ependyma (at protein level) (PubMed:32248064).</text>
</comment>
<comment type="tissue specificity">
    <molecule>Isoform 4</molecule>
    <text evidence="3">Expressed at higher levels in late spermatids than in pachytene spermatocytes.</text>
</comment>
<comment type="tissue specificity">
    <molecule>Isoform 5</molecule>
    <text evidence="3">Expressed at higher levels in pachytene spermatocytes than in late spermatids.</text>
</comment>
<comment type="PTM">
    <text evidence="4">Synthesized as an approximately 70-kDa precursor, which then undergoes proteolytic cleavage to an approximately 60-kDa enzyme; HOATZ associates directly or indirectly with ENO4 to mediate this process before its transport to mature flagella.</text>
</comment>
<comment type="disruption phenotype">
    <text evidence="3">Male mice are infertile and the sperm have significantly reduced motility, ATP levels, and enolase enzymatic activity as well as a structurally abnormal sperm fibrous sheath.</text>
</comment>
<comment type="similarity">
    <text evidence="8">Belongs to the enolase family.</text>
</comment>
<comment type="caution">
    <text evidence="8">Although it belongs to the enolase family, Leu-362 is present instead of the conserved Glu which is expected to be an active site residue.</text>
</comment>
<comment type="sequence caution" evidence="8">
    <conflict type="erroneous initiation">
        <sequence resource="EMBL-CDS" id="AAH23285"/>
    </conflict>
    <text>Truncated N-terminus.</text>
</comment>
<comment type="sequence caution" evidence="8">
    <conflict type="erroneous initiation">
        <sequence resource="EMBL-CDS" id="BAC36444"/>
    </conflict>
    <text>Truncated N-terminus.</text>
</comment>
<reference key="1">
    <citation type="journal article" date="2005" name="Science">
        <title>The transcriptional landscape of the mammalian genome.</title>
        <authorList>
            <person name="Carninci P."/>
            <person name="Kasukawa T."/>
            <person name="Katayama S."/>
            <person name="Gough J."/>
            <person name="Frith M.C."/>
            <person name="Maeda N."/>
            <person name="Oyama R."/>
            <person name="Ravasi T."/>
            <person name="Lenhard B."/>
            <person name="Wells C."/>
            <person name="Kodzius R."/>
            <person name="Shimokawa K."/>
            <person name="Bajic V.B."/>
            <person name="Brenner S.E."/>
            <person name="Batalov S."/>
            <person name="Forrest A.R."/>
            <person name="Zavolan M."/>
            <person name="Davis M.J."/>
            <person name="Wilming L.G."/>
            <person name="Aidinis V."/>
            <person name="Allen J.E."/>
            <person name="Ambesi-Impiombato A."/>
            <person name="Apweiler R."/>
            <person name="Aturaliya R.N."/>
            <person name="Bailey T.L."/>
            <person name="Bansal M."/>
            <person name="Baxter L."/>
            <person name="Beisel K.W."/>
            <person name="Bersano T."/>
            <person name="Bono H."/>
            <person name="Chalk A.M."/>
            <person name="Chiu K.P."/>
            <person name="Choudhary V."/>
            <person name="Christoffels A."/>
            <person name="Clutterbuck D.R."/>
            <person name="Crowe M.L."/>
            <person name="Dalla E."/>
            <person name="Dalrymple B.P."/>
            <person name="de Bono B."/>
            <person name="Della Gatta G."/>
            <person name="di Bernardo D."/>
            <person name="Down T."/>
            <person name="Engstrom P."/>
            <person name="Fagiolini M."/>
            <person name="Faulkner G."/>
            <person name="Fletcher C.F."/>
            <person name="Fukushima T."/>
            <person name="Furuno M."/>
            <person name="Futaki S."/>
            <person name="Gariboldi M."/>
            <person name="Georgii-Hemming P."/>
            <person name="Gingeras T.R."/>
            <person name="Gojobori T."/>
            <person name="Green R.E."/>
            <person name="Gustincich S."/>
            <person name="Harbers M."/>
            <person name="Hayashi Y."/>
            <person name="Hensch T.K."/>
            <person name="Hirokawa N."/>
            <person name="Hill D."/>
            <person name="Huminiecki L."/>
            <person name="Iacono M."/>
            <person name="Ikeo K."/>
            <person name="Iwama A."/>
            <person name="Ishikawa T."/>
            <person name="Jakt M."/>
            <person name="Kanapin A."/>
            <person name="Katoh M."/>
            <person name="Kawasawa Y."/>
            <person name="Kelso J."/>
            <person name="Kitamura H."/>
            <person name="Kitano H."/>
            <person name="Kollias G."/>
            <person name="Krishnan S.P."/>
            <person name="Kruger A."/>
            <person name="Kummerfeld S.K."/>
            <person name="Kurochkin I.V."/>
            <person name="Lareau L.F."/>
            <person name="Lazarevic D."/>
            <person name="Lipovich L."/>
            <person name="Liu J."/>
            <person name="Liuni S."/>
            <person name="McWilliam S."/>
            <person name="Madan Babu M."/>
            <person name="Madera M."/>
            <person name="Marchionni L."/>
            <person name="Matsuda H."/>
            <person name="Matsuzawa S."/>
            <person name="Miki H."/>
            <person name="Mignone F."/>
            <person name="Miyake S."/>
            <person name="Morris K."/>
            <person name="Mottagui-Tabar S."/>
            <person name="Mulder N."/>
            <person name="Nakano N."/>
            <person name="Nakauchi H."/>
            <person name="Ng P."/>
            <person name="Nilsson R."/>
            <person name="Nishiguchi S."/>
            <person name="Nishikawa S."/>
            <person name="Nori F."/>
            <person name="Ohara O."/>
            <person name="Okazaki Y."/>
            <person name="Orlando V."/>
            <person name="Pang K.C."/>
            <person name="Pavan W.J."/>
            <person name="Pavesi G."/>
            <person name="Pesole G."/>
            <person name="Petrovsky N."/>
            <person name="Piazza S."/>
            <person name="Reed J."/>
            <person name="Reid J.F."/>
            <person name="Ring B.Z."/>
            <person name="Ringwald M."/>
            <person name="Rost B."/>
            <person name="Ruan Y."/>
            <person name="Salzberg S.L."/>
            <person name="Sandelin A."/>
            <person name="Schneider C."/>
            <person name="Schoenbach C."/>
            <person name="Sekiguchi K."/>
            <person name="Semple C.A."/>
            <person name="Seno S."/>
            <person name="Sessa L."/>
            <person name="Sheng Y."/>
            <person name="Shibata Y."/>
            <person name="Shimada H."/>
            <person name="Shimada K."/>
            <person name="Silva D."/>
            <person name="Sinclair B."/>
            <person name="Sperling S."/>
            <person name="Stupka E."/>
            <person name="Sugiura K."/>
            <person name="Sultana R."/>
            <person name="Takenaka Y."/>
            <person name="Taki K."/>
            <person name="Tammoja K."/>
            <person name="Tan S.L."/>
            <person name="Tang S."/>
            <person name="Taylor M.S."/>
            <person name="Tegner J."/>
            <person name="Teichmann S.A."/>
            <person name="Ueda H.R."/>
            <person name="van Nimwegen E."/>
            <person name="Verardo R."/>
            <person name="Wei C.L."/>
            <person name="Yagi K."/>
            <person name="Yamanishi H."/>
            <person name="Zabarovsky E."/>
            <person name="Zhu S."/>
            <person name="Zimmer A."/>
            <person name="Hide W."/>
            <person name="Bult C."/>
            <person name="Grimmond S.M."/>
            <person name="Teasdale R.D."/>
            <person name="Liu E.T."/>
            <person name="Brusic V."/>
            <person name="Quackenbush J."/>
            <person name="Wahlestedt C."/>
            <person name="Mattick J.S."/>
            <person name="Hume D.A."/>
            <person name="Kai C."/>
            <person name="Sasaki D."/>
            <person name="Tomaru Y."/>
            <person name="Fukuda S."/>
            <person name="Kanamori-Katayama M."/>
            <person name="Suzuki M."/>
            <person name="Aoki J."/>
            <person name="Arakawa T."/>
            <person name="Iida J."/>
            <person name="Imamura K."/>
            <person name="Itoh M."/>
            <person name="Kato T."/>
            <person name="Kawaji H."/>
            <person name="Kawagashira N."/>
            <person name="Kawashima T."/>
            <person name="Kojima M."/>
            <person name="Kondo S."/>
            <person name="Konno H."/>
            <person name="Nakano K."/>
            <person name="Ninomiya N."/>
            <person name="Nishio T."/>
            <person name="Okada M."/>
            <person name="Plessy C."/>
            <person name="Shibata K."/>
            <person name="Shiraki T."/>
            <person name="Suzuki S."/>
            <person name="Tagami M."/>
            <person name="Waki K."/>
            <person name="Watahiki A."/>
            <person name="Okamura-Oho Y."/>
            <person name="Suzuki H."/>
            <person name="Kawai J."/>
            <person name="Hayashizaki Y."/>
        </authorList>
    </citation>
    <scope>NUCLEOTIDE SEQUENCE [LARGE SCALE MRNA] (ISOFORM 1)</scope>
    <scope>NUCLEOTIDE SEQUENCE [LARGE SCALE MRNA] OF 265-619 (ISOFORM 2)</scope>
    <source>
        <strain>C57BL/6J</strain>
        <tissue>Olfactory bulb</tissue>
        <tissue>Testis</tissue>
    </source>
</reference>
<reference key="2">
    <citation type="journal article" date="2009" name="PLoS Biol.">
        <title>Lineage-specific biology revealed by a finished genome assembly of the mouse.</title>
        <authorList>
            <person name="Church D.M."/>
            <person name="Goodstadt L."/>
            <person name="Hillier L.W."/>
            <person name="Zody M.C."/>
            <person name="Goldstein S."/>
            <person name="She X."/>
            <person name="Bult C.J."/>
            <person name="Agarwala R."/>
            <person name="Cherry J.L."/>
            <person name="DiCuccio M."/>
            <person name="Hlavina W."/>
            <person name="Kapustin Y."/>
            <person name="Meric P."/>
            <person name="Maglott D."/>
            <person name="Birtle Z."/>
            <person name="Marques A.C."/>
            <person name="Graves T."/>
            <person name="Zhou S."/>
            <person name="Teague B."/>
            <person name="Potamousis K."/>
            <person name="Churas C."/>
            <person name="Place M."/>
            <person name="Herschleb J."/>
            <person name="Runnheim R."/>
            <person name="Forrest D."/>
            <person name="Amos-Landgraf J."/>
            <person name="Schwartz D.C."/>
            <person name="Cheng Z."/>
            <person name="Lindblad-Toh K."/>
            <person name="Eichler E.E."/>
            <person name="Ponting C.P."/>
        </authorList>
    </citation>
    <scope>NUCLEOTIDE SEQUENCE [LARGE SCALE GENOMIC DNA]</scope>
    <source>
        <strain>C57BL/6J</strain>
    </source>
</reference>
<reference key="3">
    <citation type="journal article" date="2004" name="Genome Res.">
        <title>The status, quality, and expansion of the NIH full-length cDNA project: the Mammalian Gene Collection (MGC).</title>
        <authorList>
            <consortium name="The MGC Project Team"/>
        </authorList>
    </citation>
    <scope>NUCLEOTIDE SEQUENCE [LARGE SCALE MRNA] OF 177-619 (ISOFORM 3)</scope>
    <source>
        <strain>FVB/N</strain>
        <tissue>Mammary tumor</tissue>
    </source>
</reference>
<reference key="4">
    <citation type="journal article" date="2010" name="Cell">
        <title>A tissue-specific atlas of mouse protein phosphorylation and expression.</title>
        <authorList>
            <person name="Huttlin E.L."/>
            <person name="Jedrychowski M.P."/>
            <person name="Elias J.E."/>
            <person name="Goswami T."/>
            <person name="Rad R."/>
            <person name="Beausoleil S.A."/>
            <person name="Villen J."/>
            <person name="Haas W."/>
            <person name="Sowa M.E."/>
            <person name="Gygi S.P."/>
        </authorList>
    </citation>
    <scope>IDENTIFICATION BY MASS SPECTROMETRY [LARGE SCALE ANALYSIS]</scope>
    <source>
        <tissue>Testis</tissue>
    </source>
</reference>
<reference key="5">
    <citation type="journal article" date="2013" name="Biol. Reprod.">
        <title>Disruption of a spermatogenic cell-specific mouse enolase 4 (eno4) gene causes sperm structural defects and male infertility.</title>
        <authorList>
            <person name="Nakamura N."/>
            <person name="Dai Q."/>
            <person name="Williams J."/>
            <person name="Goulding E.H."/>
            <person name="Willis W.D."/>
            <person name="Brown P.R."/>
            <person name="Eddy E.M."/>
        </authorList>
    </citation>
    <scope>FUNCTION</scope>
    <scope>CATALYTIC ACTIVITY</scope>
    <scope>DISRUPTION PHENOTYPE</scope>
    <scope>TISSUE SPECIFICITY</scope>
    <scope>INTERACTION WITH ENO1 AND AKAP4</scope>
    <scope>ALTERNATIVE SPLICING (ISOFORMS 4 AND 5)</scope>
</reference>
<reference key="6">
    <citation type="journal article" date="2020" name="IScience">
        <title>Discovery of a Vertebrate-Specific Factor that Processes Flagellar Glycolytic Enolase during Motile Ciliogenesis.</title>
        <authorList>
            <person name="Narita K."/>
            <person name="Nagatomo H."/>
            <person name="Kozuka-Hata H."/>
            <person name="Oyama M."/>
            <person name="Takeda S."/>
        </authorList>
    </citation>
    <scope>TISSUE SPECIFICITY</scope>
    <scope>PROTEOLYTIC CLEAVAGE</scope>
</reference>
<accession>Q8C042</accession>
<accession>E9QLA7</accession>
<accession>Q8BVS9</accession>
<accession>Q8CFL9</accession>
<gene>
    <name type="primary">Eno4</name>
</gene>